<keyword id="KW-0066">ATP synthesis</keyword>
<keyword id="KW-0375">Hydrogen ion transport</keyword>
<keyword id="KW-0406">Ion transport</keyword>
<keyword id="KW-1185">Reference proteome</keyword>
<keyword id="KW-0813">Transport</keyword>
<organism>
    <name type="scientific">Thermoanaerobacter pseudethanolicus (strain ATCC 33223 / 39E)</name>
    <name type="common">Clostridium thermohydrosulfuricum</name>
    <dbReference type="NCBI Taxonomy" id="340099"/>
    <lineage>
        <taxon>Bacteria</taxon>
        <taxon>Bacillati</taxon>
        <taxon>Bacillota</taxon>
        <taxon>Clostridia</taxon>
        <taxon>Thermoanaerobacterales</taxon>
        <taxon>Thermoanaerobacteraceae</taxon>
        <taxon>Thermoanaerobacter</taxon>
    </lineage>
</organism>
<evidence type="ECO:0000255" key="1">
    <source>
        <dbReference type="HAMAP-Rule" id="MF_00271"/>
    </source>
</evidence>
<reference key="1">
    <citation type="submission" date="2008-01" db="EMBL/GenBank/DDBJ databases">
        <title>Complete sequence of Thermoanaerobacter pseudethanolicus 39E.</title>
        <authorList>
            <person name="Copeland A."/>
            <person name="Lucas S."/>
            <person name="Lapidus A."/>
            <person name="Barry K."/>
            <person name="Glavina del Rio T."/>
            <person name="Dalin E."/>
            <person name="Tice H."/>
            <person name="Pitluck S."/>
            <person name="Bruce D."/>
            <person name="Goodwin L."/>
            <person name="Saunders E."/>
            <person name="Brettin T."/>
            <person name="Detter J.C."/>
            <person name="Han C."/>
            <person name="Schmutz J."/>
            <person name="Larimer F."/>
            <person name="Land M."/>
            <person name="Hauser L."/>
            <person name="Kyrpides N."/>
            <person name="Lykidis A."/>
            <person name="Hemme C."/>
            <person name="Fields M.W."/>
            <person name="He Z."/>
            <person name="Zhou J."/>
            <person name="Richardson P."/>
        </authorList>
    </citation>
    <scope>NUCLEOTIDE SEQUENCE [LARGE SCALE GENOMIC DNA]</scope>
    <source>
        <strain>ATCC 33223 / DSM 2355 / 39E</strain>
    </source>
</reference>
<accession>B0K8E6</accession>
<comment type="function">
    <text evidence="1">Produces ATP from ADP in the presence of a proton gradient across the membrane.</text>
</comment>
<comment type="similarity">
    <text evidence="1">Belongs to the V-ATPase D subunit family.</text>
</comment>
<feature type="chain" id="PRO_1000114488" description="V-type ATP synthase subunit D">
    <location>
        <begin position="1"/>
        <end position="209"/>
    </location>
</feature>
<proteinExistence type="inferred from homology"/>
<protein>
    <recommendedName>
        <fullName evidence="1">V-type ATP synthase subunit D</fullName>
    </recommendedName>
    <alternativeName>
        <fullName evidence="1">V-ATPase subunit D</fullName>
    </alternativeName>
</protein>
<name>VATD_THEP3</name>
<gene>
    <name evidence="1" type="primary">atpD</name>
    <name type="ordered locus">Teth39_2257</name>
</gene>
<sequence>MTMIHVNPTRMELTSLKKRLVTAKRGHKLLKDKQDELVKKFLDMVKQNRALREEVEAELIGAFKSFTMARSQMSANVVEESLMIPSAKVSINVKKENIMSVNVPKLEILQEESKNLYPYGFANTSAEMDAAIRTLATMLPKMLKLAELEKACQLMADEIEKTRRRVNALEYVLIPQLENTIKYITMKLDENERSSRTRLMKIKEMVMKG</sequence>
<dbReference type="EMBL" id="CP000924">
    <property type="protein sequence ID" value="ABY95878.1"/>
    <property type="molecule type" value="Genomic_DNA"/>
</dbReference>
<dbReference type="SMR" id="B0K8E6"/>
<dbReference type="STRING" id="340099.Teth39_2257"/>
<dbReference type="KEGG" id="tpd:Teth39_2257"/>
<dbReference type="eggNOG" id="COG1394">
    <property type="taxonomic scope" value="Bacteria"/>
</dbReference>
<dbReference type="HOGENOM" id="CLU_069688_2_1_9"/>
<dbReference type="Proteomes" id="UP000002156">
    <property type="component" value="Chromosome"/>
</dbReference>
<dbReference type="GO" id="GO:0005524">
    <property type="term" value="F:ATP binding"/>
    <property type="evidence" value="ECO:0007669"/>
    <property type="project" value="UniProtKB-UniRule"/>
</dbReference>
<dbReference type="GO" id="GO:0046933">
    <property type="term" value="F:proton-transporting ATP synthase activity, rotational mechanism"/>
    <property type="evidence" value="ECO:0007669"/>
    <property type="project" value="UniProtKB-UniRule"/>
</dbReference>
<dbReference type="GO" id="GO:0046961">
    <property type="term" value="F:proton-transporting ATPase activity, rotational mechanism"/>
    <property type="evidence" value="ECO:0007669"/>
    <property type="project" value="InterPro"/>
</dbReference>
<dbReference type="GO" id="GO:0042777">
    <property type="term" value="P:proton motive force-driven plasma membrane ATP synthesis"/>
    <property type="evidence" value="ECO:0007669"/>
    <property type="project" value="UniProtKB-UniRule"/>
</dbReference>
<dbReference type="FunFam" id="1.10.287.3240:FF:000007">
    <property type="entry name" value="V-type ATP synthase subunit D"/>
    <property type="match status" value="1"/>
</dbReference>
<dbReference type="Gene3D" id="1.10.287.3240">
    <property type="match status" value="1"/>
</dbReference>
<dbReference type="HAMAP" id="MF_00271">
    <property type="entry name" value="ATP_synth_D_arch"/>
    <property type="match status" value="1"/>
</dbReference>
<dbReference type="InterPro" id="IPR002699">
    <property type="entry name" value="V_ATPase_D"/>
</dbReference>
<dbReference type="NCBIfam" id="NF001543">
    <property type="entry name" value="PRK00373.1-2"/>
    <property type="match status" value="1"/>
</dbReference>
<dbReference type="NCBIfam" id="TIGR00309">
    <property type="entry name" value="V_ATPase_subD"/>
    <property type="match status" value="1"/>
</dbReference>
<dbReference type="PANTHER" id="PTHR11671">
    <property type="entry name" value="V-TYPE ATP SYNTHASE SUBUNIT D"/>
    <property type="match status" value="1"/>
</dbReference>
<dbReference type="Pfam" id="PF01813">
    <property type="entry name" value="ATP-synt_D"/>
    <property type="match status" value="1"/>
</dbReference>